<organism>
    <name type="scientific">Homo sapiens</name>
    <name type="common">Human</name>
    <dbReference type="NCBI Taxonomy" id="9606"/>
    <lineage>
        <taxon>Eukaryota</taxon>
        <taxon>Metazoa</taxon>
        <taxon>Chordata</taxon>
        <taxon>Craniata</taxon>
        <taxon>Vertebrata</taxon>
        <taxon>Euteleostomi</taxon>
        <taxon>Mammalia</taxon>
        <taxon>Eutheria</taxon>
        <taxon>Euarchontoglires</taxon>
        <taxon>Primates</taxon>
        <taxon>Haplorrhini</taxon>
        <taxon>Catarrhini</taxon>
        <taxon>Hominidae</taxon>
        <taxon>Homo</taxon>
    </lineage>
</organism>
<accession>P62495</accession>
<accession>B2R6B4</accession>
<accession>D3DQC1</accession>
<accession>P46055</accession>
<accession>Q5M7Z7</accession>
<accession>Q96CG1</accession>
<gene>
    <name type="primary">ETF1</name>
    <name type="synonym">ERF1</name>
    <name type="synonym">RF1</name>
    <name type="synonym">SUP45L1</name>
</gene>
<proteinExistence type="evidence at protein level"/>
<comment type="function">
    <text evidence="2 4 6 9 10 12 13 14 16">Component of the eRF1-eRF3-GTP ternary complex, a ternary complex that mediates translation termination in response to the termination codons (PubMed:10676813, PubMed:16777602, PubMed:24486019, PubMed:26245381, PubMed:27863242, PubMed:36638793, PubMed:7990965). The eRF1-eRF3-GTP complex binds to a stop codon in the ribosomal A-site (PubMed:26245381, PubMed:27863242, PubMed:36638793). ETF1/ERF1 is responsible for stop codon recognition and inducing hydrolysis of peptidyl-tRNA (PubMed:26245381, PubMed:27863242, PubMed:36638793). Following GTP hydrolysis, eRF3 (GSPT1/ERF3A or GSPT2/ERF3B) dissociates, permitting ETF1/eRF1 to accommodate fully in the A-site and mediate hydrolysis of peptidyl-tRNA (PubMed:10676813, PubMed:16777602, PubMed:26245381, PubMed:27863242). Component of the transient SURF complex which recruits UPF1 to stalled ribosomes in the context of nonsense-mediated decay (NMD) of mRNAs containing premature stop codons (PubMed:19417104). Required for SHFL-mediated translation termination which inhibits programmed ribosomal frameshifting (-1PRF) of mRNA from viruses and cellular genes (PubMed:30682371).</text>
</comment>
<comment type="subunit">
    <text evidence="6 7 9 12">Component of the eRF1-eRF3-GTP ternary complex, composed of ETF1/ERF1 and eRF3 (GSPT1/ERF3A or GSPT2/ERF3B) and GTP (PubMed:19417105, PubMed:27863242). Component of the transient SURF (SMG1-UPF1-eRF1-eRF3) complex (PubMed:19417104). Interacts with JMJD4 (PubMed:24486019). The ETF1-GSPT1 complex interacts with JMJD4 (PubMed:24486019).</text>
</comment>
<comment type="interaction">
    <interactant intactId="EBI-750990">
        <id>P62495</id>
    </interactant>
    <interactant intactId="EBI-948993">
        <id>P15170</id>
        <label>GSPT1</label>
    </interactant>
    <organismsDiffer>false</organismsDiffer>
    <experiments>5</experiments>
</comment>
<comment type="interaction">
    <interactant intactId="EBI-750990">
        <id>P62495</id>
    </interactant>
    <interactant intactId="EBI-3869637">
        <id>Q8IYD1</id>
        <label>GSPT2</label>
    </interactant>
    <organismsDiffer>false</organismsDiffer>
    <experiments>3</experiments>
</comment>
<comment type="interaction">
    <interactant intactId="EBI-750990">
        <id>P62495</id>
    </interactant>
    <interactant intactId="EBI-751001">
        <id>Q14145</id>
        <label>KEAP1</label>
    </interactant>
    <organismsDiffer>false</organismsDiffer>
    <experiments>8</experiments>
</comment>
<comment type="subcellular location">
    <subcellularLocation>
        <location evidence="9">Cytoplasm</location>
    </subcellularLocation>
</comment>
<comment type="alternative products">
    <event type="alternative splicing"/>
    <isoform>
        <id>P62495-1</id>
        <name>1</name>
        <sequence type="displayed"/>
    </isoform>
    <isoform>
        <id>P62495-2</id>
        <name>2</name>
        <sequence type="described" ref="VSP_056189"/>
    </isoform>
</comment>
<comment type="PTM">
    <text evidence="5 8 11">Methylated at Gln-185 by N6AMT1.</text>
</comment>
<comment type="PTM">
    <text evidence="9">Hydroxylation at Lys-63 by JMJD4 promotes its translational termination efficiency.</text>
</comment>
<comment type="PTM">
    <text evidence="14">Ubiquitinated at Lys-279 via 'Lys-6'-linked polyubiquitin chains by RNF14 and RNF25 in response to ribosome collisions (ribosome stalling), leading to its degradation by the proteasome and rescue of stalled ribosomes.</text>
</comment>
<comment type="similarity">
    <text evidence="19">Belongs to the eukaryotic release factor 1 family.</text>
</comment>
<feature type="initiator methionine" description="Removed" evidence="3 28 29">
    <location>
        <position position="1"/>
    </location>
</feature>
<feature type="chain" id="PRO_0000143138" description="Eukaryotic peptide chain release factor subunit 1">
    <location>
        <begin position="2"/>
        <end position="437"/>
    </location>
</feature>
<feature type="short sequence motif" description="NIKS motif; plays an important role in translational termination" evidence="20">
    <location>
        <begin position="61"/>
        <end position="64"/>
    </location>
</feature>
<feature type="modified residue" description="N-acetylalanine" evidence="3 28 29">
    <location>
        <position position="2"/>
    </location>
</feature>
<feature type="modified residue" description="4-hydroxylysine" evidence="9">
    <location>
        <position position="63"/>
    </location>
</feature>
<feature type="modified residue" description="N5-methylglutamine" evidence="5 8 11">
    <location>
        <position position="185"/>
    </location>
</feature>
<feature type="modified residue" description="Phosphothreonine" evidence="30">
    <location>
        <position position="347"/>
    </location>
</feature>
<feature type="cross-link" description="Glycyl lysine isopeptide (Lys-Gly) (interchain with G-Cter in SUMO2)" evidence="31">
    <location>
        <position position="87"/>
    </location>
</feature>
<feature type="cross-link" description="Glycyl lysine isopeptide (Lys-Gly) (interchain with G-Cter in ubiquitin)" evidence="15">
    <location>
        <position position="279"/>
    </location>
</feature>
<feature type="cross-link" description="Glycyl lysine isopeptide (Lys-Gly) (interchain with G-Cter in SUMO2)" evidence="31">
    <location>
        <position position="404"/>
    </location>
</feature>
<feature type="splice variant" id="VSP_056189" description="In isoform 2." evidence="17 18">
    <location>
        <begin position="1"/>
        <end position="33"/>
    </location>
</feature>
<feature type="mutagenesis site" description="Loss of hydroxylation." evidence="9">
    <original>K</original>
    <variation>A</variation>
    <variation>R</variation>
    <location>
        <position position="63"/>
    </location>
</feature>
<feature type="mutagenesis site" description="In AAQ mutant; abolished ability to mediate translation termination. Can recognize stop codons in ribosomal A-site, but is unable to catalyze peptidyl-tRNA hydrolysis, promoting ribosome collisions." evidence="1 4 10 14">
    <original>GG</original>
    <variation>AA</variation>
    <location>
        <begin position="183"/>
        <end position="184"/>
    </location>
</feature>
<feature type="mutagenesis site" description="Abolishes methylation by N6AMT1." evidence="8 11">
    <original>Q</original>
    <variation>R</variation>
    <variation>I</variation>
    <variation>N</variation>
    <location>
        <position position="185"/>
    </location>
</feature>
<feature type="strand" evidence="35">
    <location>
        <begin position="4"/>
        <end position="6"/>
    </location>
</feature>
<feature type="turn" evidence="32">
    <location>
        <begin position="7"/>
        <end position="9"/>
    </location>
</feature>
<feature type="helix" evidence="32">
    <location>
        <begin position="10"/>
        <end position="25"/>
    </location>
</feature>
<feature type="strand" evidence="32">
    <location>
        <begin position="30"/>
        <end position="32"/>
    </location>
</feature>
<feature type="strand" evidence="32">
    <location>
        <begin position="34"/>
        <end position="39"/>
    </location>
</feature>
<feature type="strand" evidence="32">
    <location>
        <begin position="41"/>
        <end position="43"/>
    </location>
</feature>
<feature type="helix" evidence="32">
    <location>
        <begin position="45"/>
        <end position="59"/>
    </location>
</feature>
<feature type="strand" evidence="36">
    <location>
        <begin position="62"/>
        <end position="64"/>
    </location>
</feature>
<feature type="helix" evidence="32">
    <location>
        <begin position="66"/>
        <end position="82"/>
    </location>
</feature>
<feature type="strand" evidence="32">
    <location>
        <begin position="93"/>
        <end position="101"/>
    </location>
</feature>
<feature type="helix" evidence="32">
    <location>
        <begin position="103"/>
        <end position="105"/>
    </location>
</feature>
<feature type="strand" evidence="32">
    <location>
        <begin position="107"/>
        <end position="114"/>
    </location>
</feature>
<feature type="strand" evidence="32">
    <location>
        <begin position="124"/>
        <end position="130"/>
    </location>
</feature>
<feature type="helix" evidence="32">
    <location>
        <begin position="134"/>
        <end position="139"/>
    </location>
</feature>
<feature type="strand" evidence="32">
    <location>
        <begin position="145"/>
        <end position="150"/>
    </location>
</feature>
<feature type="strand" evidence="32">
    <location>
        <begin position="158"/>
        <end position="162"/>
    </location>
</feature>
<feature type="strand" evidence="32">
    <location>
        <begin position="165"/>
        <end position="170"/>
    </location>
</feature>
<feature type="strand" evidence="33">
    <location>
        <begin position="180"/>
        <end position="185"/>
    </location>
</feature>
<feature type="helix" evidence="32">
    <location>
        <begin position="188"/>
        <end position="197"/>
    </location>
</feature>
<feature type="turn" evidence="32">
    <location>
        <begin position="198"/>
        <end position="203"/>
    </location>
</feature>
<feature type="helix" evidence="32">
    <location>
        <begin position="204"/>
        <end position="208"/>
    </location>
</feature>
<feature type="turn" evidence="32">
    <location>
        <begin position="209"/>
        <end position="212"/>
    </location>
</feature>
<feature type="strand" evidence="32">
    <location>
        <begin position="216"/>
        <end position="218"/>
    </location>
</feature>
<feature type="strand" evidence="32">
    <location>
        <begin position="220"/>
        <end position="222"/>
    </location>
</feature>
<feature type="strand" evidence="32">
    <location>
        <begin position="225"/>
        <end position="229"/>
    </location>
</feature>
<feature type="turn" evidence="32">
    <location>
        <begin position="230"/>
        <end position="233"/>
    </location>
</feature>
<feature type="helix" evidence="32">
    <location>
        <begin position="234"/>
        <end position="237"/>
    </location>
</feature>
<feature type="strand" evidence="32">
    <location>
        <begin position="240"/>
        <end position="242"/>
    </location>
</feature>
<feature type="turn" evidence="32">
    <location>
        <begin position="244"/>
        <end position="249"/>
    </location>
</feature>
<feature type="strand" evidence="32">
    <location>
        <begin position="253"/>
        <end position="255"/>
    </location>
</feature>
<feature type="helix" evidence="32">
    <location>
        <begin position="262"/>
        <end position="271"/>
    </location>
</feature>
<feature type="turn" evidence="32">
    <location>
        <begin position="274"/>
        <end position="276"/>
    </location>
</feature>
<feature type="helix" evidence="32">
    <location>
        <begin position="278"/>
        <end position="295"/>
    </location>
</feature>
<feature type="strand" evidence="32">
    <location>
        <begin position="296"/>
        <end position="298"/>
    </location>
</feature>
<feature type="strand" evidence="32">
    <location>
        <begin position="301"/>
        <end position="304"/>
    </location>
</feature>
<feature type="helix" evidence="32">
    <location>
        <begin position="305"/>
        <end position="313"/>
    </location>
</feature>
<feature type="strand" evidence="32">
    <location>
        <begin position="318"/>
        <end position="324"/>
    </location>
</feature>
<feature type="strand" evidence="34">
    <location>
        <begin position="329"/>
        <end position="333"/>
    </location>
</feature>
<feature type="strand" evidence="34">
    <location>
        <begin position="336"/>
        <end position="339"/>
    </location>
</feature>
<feature type="strand" evidence="34">
    <location>
        <begin position="342"/>
        <end position="346"/>
    </location>
</feature>
<feature type="helix" evidence="34">
    <location>
        <begin position="348"/>
        <end position="352"/>
    </location>
</feature>
<feature type="turn" evidence="34">
    <location>
        <begin position="354"/>
        <end position="356"/>
    </location>
</feature>
<feature type="turn" evidence="34">
    <location>
        <begin position="360"/>
        <end position="362"/>
    </location>
</feature>
<feature type="strand" evidence="34">
    <location>
        <begin position="368"/>
        <end position="372"/>
    </location>
</feature>
<feature type="helix" evidence="32">
    <location>
        <begin position="374"/>
        <end position="380"/>
    </location>
</feature>
<feature type="turn" evidence="32">
    <location>
        <begin position="383"/>
        <end position="386"/>
    </location>
</feature>
<feature type="strand" evidence="32">
    <location>
        <begin position="389"/>
        <end position="392"/>
    </location>
</feature>
<feature type="strand" evidence="32">
    <location>
        <begin position="394"/>
        <end position="396"/>
    </location>
</feature>
<feature type="helix" evidence="32">
    <location>
        <begin position="397"/>
        <end position="404"/>
    </location>
</feature>
<feature type="turn" evidence="32">
    <location>
        <begin position="405"/>
        <end position="408"/>
    </location>
</feature>
<feature type="strand" evidence="32">
    <location>
        <begin position="409"/>
        <end position="412"/>
    </location>
</feature>
<feature type="strand" evidence="34">
    <location>
        <begin position="420"/>
        <end position="422"/>
    </location>
</feature>
<feature type="turn" evidence="34">
    <location>
        <begin position="423"/>
        <end position="425"/>
    </location>
</feature>
<feature type="strand" evidence="34">
    <location>
        <begin position="426"/>
        <end position="428"/>
    </location>
</feature>
<feature type="helix" evidence="34">
    <location>
        <begin position="434"/>
        <end position="437"/>
    </location>
</feature>
<protein>
    <recommendedName>
        <fullName>Eukaryotic peptide chain release factor subunit 1</fullName>
        <shortName>Eukaryotic release factor 1</shortName>
        <shortName>eRF1</shortName>
    </recommendedName>
    <alternativeName>
        <fullName>Protein Cl1</fullName>
    </alternativeName>
    <alternativeName>
        <fullName>TB3-1</fullName>
    </alternativeName>
</protein>
<dbReference type="EMBL" id="M75715">
    <property type="protein sequence ID" value="AAA36665.1"/>
    <property type="status" value="ALT_SEQ"/>
    <property type="molecule type" value="mRNA"/>
</dbReference>
<dbReference type="EMBL" id="X81625">
    <property type="protein sequence ID" value="CAA57281.1"/>
    <property type="molecule type" value="mRNA"/>
</dbReference>
<dbReference type="EMBL" id="U90176">
    <property type="protein sequence ID" value="AAB49726.1"/>
    <property type="molecule type" value="mRNA"/>
</dbReference>
<dbReference type="EMBL" id="AF095901">
    <property type="protein sequence ID" value="AAD43966.1"/>
    <property type="molecule type" value="Genomic_DNA"/>
</dbReference>
<dbReference type="EMBL" id="BT007374">
    <property type="protein sequence ID" value="AAP36038.1"/>
    <property type="molecule type" value="mRNA"/>
</dbReference>
<dbReference type="EMBL" id="AK312510">
    <property type="protein sequence ID" value="BAG35411.1"/>
    <property type="molecule type" value="mRNA"/>
</dbReference>
<dbReference type="EMBL" id="AC011385">
    <property type="status" value="NOT_ANNOTATED_CDS"/>
    <property type="molecule type" value="Genomic_DNA"/>
</dbReference>
<dbReference type="EMBL" id="AC113403">
    <property type="status" value="NOT_ANNOTATED_CDS"/>
    <property type="molecule type" value="Genomic_DNA"/>
</dbReference>
<dbReference type="EMBL" id="CH471062">
    <property type="protein sequence ID" value="EAW62130.1"/>
    <property type="molecule type" value="Genomic_DNA"/>
</dbReference>
<dbReference type="EMBL" id="CH471062">
    <property type="protein sequence ID" value="EAW62131.1"/>
    <property type="molecule type" value="Genomic_DNA"/>
</dbReference>
<dbReference type="EMBL" id="CH471062">
    <property type="protein sequence ID" value="EAW62132.1"/>
    <property type="molecule type" value="Genomic_DNA"/>
</dbReference>
<dbReference type="EMBL" id="BC088358">
    <property type="protein sequence ID" value="AAH88358.1"/>
    <property type="molecule type" value="mRNA"/>
</dbReference>
<dbReference type="EMBL" id="BC014269">
    <property type="protein sequence ID" value="AAH14269.1"/>
    <property type="molecule type" value="mRNA"/>
</dbReference>
<dbReference type="CCDS" id="CCDS4207.1">
    <molecule id="P62495-1"/>
</dbReference>
<dbReference type="CCDS" id="CCDS75313.1">
    <molecule id="P62495-2"/>
</dbReference>
<dbReference type="PIR" id="S50853">
    <property type="entry name" value="S50853"/>
</dbReference>
<dbReference type="RefSeq" id="NP_001243231.1">
    <molecule id="P62495-2"/>
    <property type="nucleotide sequence ID" value="NM_001256302.2"/>
</dbReference>
<dbReference type="RefSeq" id="NP_001278903.1">
    <molecule id="P62495-2"/>
    <property type="nucleotide sequence ID" value="NM_001291974.2"/>
</dbReference>
<dbReference type="RefSeq" id="NP_001278904.1">
    <molecule id="P62495-2"/>
    <property type="nucleotide sequence ID" value="NM_001291975.2"/>
</dbReference>
<dbReference type="RefSeq" id="NP_001351089.1">
    <molecule id="P62495-2"/>
    <property type="nucleotide sequence ID" value="NM_001364160.2"/>
</dbReference>
<dbReference type="RefSeq" id="NP_004721.1">
    <molecule id="P62495-1"/>
    <property type="nucleotide sequence ID" value="NM_004730.4"/>
</dbReference>
<dbReference type="RefSeq" id="XP_005271978.1">
    <property type="nucleotide sequence ID" value="XM_005271921.1"/>
</dbReference>
<dbReference type="RefSeq" id="XP_047272886.1">
    <molecule id="P62495-1"/>
    <property type="nucleotide sequence ID" value="XM_047416930.1"/>
</dbReference>
<dbReference type="RefSeq" id="XP_047272887.1">
    <molecule id="P62495-2"/>
    <property type="nucleotide sequence ID" value="XM_047416931.1"/>
</dbReference>
<dbReference type="PDB" id="1DT9">
    <property type="method" value="X-ray"/>
    <property type="resolution" value="2.70 A"/>
    <property type="chains" value="A=1-437"/>
</dbReference>
<dbReference type="PDB" id="2HST">
    <property type="method" value="NMR"/>
    <property type="chains" value="A=140-275"/>
</dbReference>
<dbReference type="PDB" id="2KTU">
    <property type="method" value="NMR"/>
    <property type="chains" value="A=276-437"/>
</dbReference>
<dbReference type="PDB" id="2KTV">
    <property type="method" value="NMR"/>
    <property type="chains" value="A=276-437"/>
</dbReference>
<dbReference type="PDB" id="2LGT">
    <property type="method" value="NMR"/>
    <property type="chains" value="A=1-142"/>
</dbReference>
<dbReference type="PDB" id="2LLX">
    <property type="method" value="NMR"/>
    <property type="chains" value="A=1-142"/>
</dbReference>
<dbReference type="PDB" id="2MQ6">
    <property type="method" value="NMR"/>
    <property type="chains" value="A=1-142"/>
</dbReference>
<dbReference type="PDB" id="2MQ9">
    <property type="method" value="NMR"/>
    <property type="chains" value="A=1-142"/>
</dbReference>
<dbReference type="PDB" id="3E1Y">
    <property type="method" value="X-ray"/>
    <property type="resolution" value="3.80 A"/>
    <property type="chains" value="A/B/C/D=1-437"/>
</dbReference>
<dbReference type="PDB" id="3J5Y">
    <property type="method" value="EM"/>
    <property type="resolution" value="9.70 A"/>
    <property type="chains" value="A=7-420"/>
</dbReference>
<dbReference type="PDB" id="3JAG">
    <property type="method" value="EM"/>
    <property type="resolution" value="3.65 A"/>
    <property type="chains" value="ii=6-421"/>
</dbReference>
<dbReference type="PDB" id="3JAH">
    <property type="method" value="EM"/>
    <property type="resolution" value="3.45 A"/>
    <property type="chains" value="ii=6-421"/>
</dbReference>
<dbReference type="PDB" id="3JAI">
    <property type="method" value="EM"/>
    <property type="resolution" value="3.65 A"/>
    <property type="chains" value="ii=6-421"/>
</dbReference>
<dbReference type="PDB" id="4D5N">
    <property type="method" value="EM"/>
    <property type="resolution" value="9.00 A"/>
    <property type="chains" value="A=5-437"/>
</dbReference>
<dbReference type="PDB" id="4D61">
    <property type="method" value="EM"/>
    <property type="resolution" value="9.00 A"/>
    <property type="chains" value="h=5-437"/>
</dbReference>
<dbReference type="PDB" id="5A8L">
    <property type="method" value="EM"/>
    <property type="resolution" value="3.80 A"/>
    <property type="chains" value="Q=7-437"/>
</dbReference>
<dbReference type="PDB" id="5LZT">
    <property type="method" value="EM"/>
    <property type="resolution" value="3.65 A"/>
    <property type="chains" value="ii=1-437"/>
</dbReference>
<dbReference type="PDB" id="5LZU">
    <property type="method" value="EM"/>
    <property type="resolution" value="3.75 A"/>
    <property type="chains" value="ii=1-437"/>
</dbReference>
<dbReference type="PDB" id="5LZV">
    <property type="method" value="EM"/>
    <property type="resolution" value="3.35 A"/>
    <property type="chains" value="ii=1-437"/>
</dbReference>
<dbReference type="PDB" id="6D90">
    <property type="method" value="EM"/>
    <property type="resolution" value="3.20 A"/>
    <property type="chains" value="jj=1-437"/>
</dbReference>
<dbReference type="PDB" id="6IP8">
    <property type="method" value="EM"/>
    <property type="resolution" value="3.90 A"/>
    <property type="chains" value="zw=7-437"/>
</dbReference>
<dbReference type="PDB" id="6XA1">
    <property type="method" value="EM"/>
    <property type="resolution" value="2.80 A"/>
    <property type="chains" value="j=11-421"/>
</dbReference>
<dbReference type="PDB" id="6ZME">
    <property type="method" value="EM"/>
    <property type="resolution" value="3.00 A"/>
    <property type="chains" value="CH=1-437"/>
</dbReference>
<dbReference type="PDB" id="8SCB">
    <property type="method" value="EM"/>
    <property type="resolution" value="2.50 A"/>
    <property type="chains" value="ii=1-437"/>
</dbReference>
<dbReference type="PDBsum" id="1DT9"/>
<dbReference type="PDBsum" id="2HST"/>
<dbReference type="PDBsum" id="2KTU"/>
<dbReference type="PDBsum" id="2KTV"/>
<dbReference type="PDBsum" id="2LGT"/>
<dbReference type="PDBsum" id="2LLX"/>
<dbReference type="PDBsum" id="2MQ6"/>
<dbReference type="PDBsum" id="2MQ9"/>
<dbReference type="PDBsum" id="3E1Y"/>
<dbReference type="PDBsum" id="3J5Y"/>
<dbReference type="PDBsum" id="3JAG"/>
<dbReference type="PDBsum" id="3JAH"/>
<dbReference type="PDBsum" id="3JAI"/>
<dbReference type="PDBsum" id="4D5N"/>
<dbReference type="PDBsum" id="4D61"/>
<dbReference type="PDBsum" id="5A8L"/>
<dbReference type="PDBsum" id="5LZT"/>
<dbReference type="PDBsum" id="5LZU"/>
<dbReference type="PDBsum" id="5LZV"/>
<dbReference type="PDBsum" id="6D90"/>
<dbReference type="PDBsum" id="6IP8"/>
<dbReference type="PDBsum" id="6XA1"/>
<dbReference type="PDBsum" id="6ZME"/>
<dbReference type="PDBsum" id="8SCB"/>
<dbReference type="BMRB" id="P62495"/>
<dbReference type="EMDB" id="EMD-11289"/>
<dbReference type="EMDB" id="EMD-20258"/>
<dbReference type="EMDB" id="EMD-2810"/>
<dbReference type="EMDB" id="EMD-2813"/>
<dbReference type="EMDB" id="EMD-3038"/>
<dbReference type="EMDB" id="EMD-3039"/>
<dbReference type="EMDB" id="EMD-3040"/>
<dbReference type="EMDB" id="EMD-40344"/>
<dbReference type="EMDB" id="EMD-4131"/>
<dbReference type="EMDB" id="EMD-4132"/>
<dbReference type="EMDB" id="EMD-4133"/>
<dbReference type="EMDB" id="EMD-5801"/>
<dbReference type="EMDB" id="EMD-7834"/>
<dbReference type="EMDB" id="EMD-9703"/>
<dbReference type="SMR" id="P62495"/>
<dbReference type="BioGRID" id="108408">
    <property type="interactions" value="146"/>
</dbReference>
<dbReference type="ComplexPortal" id="CPX-2721">
    <property type="entry name" value="ERF1-ERF3 translation release factor complex, GSPT1 variant"/>
</dbReference>
<dbReference type="ComplexPortal" id="CPX-8923">
    <property type="entry name" value="ERF1-ERF3 translation release factor complex, GSPT2 variant"/>
</dbReference>
<dbReference type="CORUM" id="P62495"/>
<dbReference type="FunCoup" id="P62495">
    <property type="interactions" value="4003"/>
</dbReference>
<dbReference type="IntAct" id="P62495">
    <property type="interactions" value="67"/>
</dbReference>
<dbReference type="MINT" id="P62495"/>
<dbReference type="STRING" id="9606.ENSP00000353741"/>
<dbReference type="GlyCosmos" id="P62495">
    <property type="glycosylation" value="1 site, 1 glycan"/>
</dbReference>
<dbReference type="GlyGen" id="P62495">
    <property type="glycosylation" value="3 sites, 2 N-linked glycans (2 sites), 1 O-linked glycan (1 site)"/>
</dbReference>
<dbReference type="iPTMnet" id="P62495"/>
<dbReference type="MetOSite" id="P62495"/>
<dbReference type="PhosphoSitePlus" id="P62495"/>
<dbReference type="SwissPalm" id="P62495"/>
<dbReference type="BioMuta" id="ETF1"/>
<dbReference type="DMDM" id="50402099"/>
<dbReference type="jPOST" id="P62495"/>
<dbReference type="MassIVE" id="P62495"/>
<dbReference type="PaxDb" id="9606-ENSP00000353741"/>
<dbReference type="PeptideAtlas" id="P62495"/>
<dbReference type="ProteomicsDB" id="57403">
    <molecule id="P62495-1"/>
</dbReference>
<dbReference type="ProteomicsDB" id="76184"/>
<dbReference type="Pumba" id="P62495"/>
<dbReference type="Antibodypedia" id="26674">
    <property type="antibodies" value="203 antibodies from 28 providers"/>
</dbReference>
<dbReference type="DNASU" id="2107"/>
<dbReference type="Ensembl" id="ENST00000360541.10">
    <molecule id="P62495-1"/>
    <property type="protein sequence ID" value="ENSP00000353741.5"/>
    <property type="gene ID" value="ENSG00000120705.13"/>
</dbReference>
<dbReference type="Ensembl" id="ENST00000499810.6">
    <molecule id="P62495-2"/>
    <property type="protein sequence ID" value="ENSP00000421288.1"/>
    <property type="gene ID" value="ENSG00000120705.13"/>
</dbReference>
<dbReference type="GeneID" id="2107"/>
<dbReference type="KEGG" id="hsa:2107"/>
<dbReference type="MANE-Select" id="ENST00000360541.10">
    <property type="protein sequence ID" value="ENSP00000353741.5"/>
    <property type="RefSeq nucleotide sequence ID" value="NM_004730.4"/>
    <property type="RefSeq protein sequence ID" value="NP_004721.1"/>
</dbReference>
<dbReference type="UCSC" id="uc003ldc.6">
    <molecule id="P62495-1"/>
    <property type="organism name" value="human"/>
</dbReference>
<dbReference type="AGR" id="HGNC:3477"/>
<dbReference type="CTD" id="2107"/>
<dbReference type="DisGeNET" id="2107"/>
<dbReference type="GeneCards" id="ETF1"/>
<dbReference type="HGNC" id="HGNC:3477">
    <property type="gene designation" value="ETF1"/>
</dbReference>
<dbReference type="HPA" id="ENSG00000120705">
    <property type="expression patterns" value="Low tissue specificity"/>
</dbReference>
<dbReference type="MIM" id="600285">
    <property type="type" value="gene"/>
</dbReference>
<dbReference type="neXtProt" id="NX_P62495"/>
<dbReference type="OpenTargets" id="ENSG00000120705"/>
<dbReference type="PharmGKB" id="PA27893"/>
<dbReference type="VEuPathDB" id="HostDB:ENSG00000120705"/>
<dbReference type="eggNOG" id="KOG0688">
    <property type="taxonomic scope" value="Eukaryota"/>
</dbReference>
<dbReference type="GeneTree" id="ENSGT00390000009004"/>
<dbReference type="HOGENOM" id="CLU_035759_2_1_1"/>
<dbReference type="InParanoid" id="P62495"/>
<dbReference type="OMA" id="RCNGSEE"/>
<dbReference type="OrthoDB" id="10254527at2759"/>
<dbReference type="PAN-GO" id="P62495">
    <property type="GO annotations" value="4 GO annotations based on evolutionary models"/>
</dbReference>
<dbReference type="PhylomeDB" id="P62495"/>
<dbReference type="TreeFam" id="TF105672"/>
<dbReference type="PathwayCommons" id="P62495"/>
<dbReference type="Reactome" id="R-HSA-72764">
    <property type="pathway name" value="Eukaryotic Translation Termination"/>
</dbReference>
<dbReference type="Reactome" id="R-HSA-9010553">
    <property type="pathway name" value="Regulation of expression of SLITs and ROBOs"/>
</dbReference>
<dbReference type="Reactome" id="R-HSA-9629569">
    <property type="pathway name" value="Protein hydroxylation"/>
</dbReference>
<dbReference type="Reactome" id="R-HSA-975956">
    <property type="pathway name" value="Nonsense Mediated Decay (NMD) independent of the Exon Junction Complex (EJC)"/>
</dbReference>
<dbReference type="Reactome" id="R-HSA-975957">
    <property type="pathway name" value="Nonsense Mediated Decay (NMD) enhanced by the Exon Junction Complex (EJC)"/>
</dbReference>
<dbReference type="SignaLink" id="P62495"/>
<dbReference type="SIGNOR" id="P62495"/>
<dbReference type="BioGRID-ORCS" id="2107">
    <property type="hits" value="751 hits in 1153 CRISPR screens"/>
</dbReference>
<dbReference type="CD-CODE" id="232F8A39">
    <property type="entry name" value="P-body"/>
</dbReference>
<dbReference type="CD-CODE" id="91857CE7">
    <property type="entry name" value="Nucleolus"/>
</dbReference>
<dbReference type="CD-CODE" id="DEE660B4">
    <property type="entry name" value="Stress granule"/>
</dbReference>
<dbReference type="ChiTaRS" id="ETF1">
    <property type="organism name" value="human"/>
</dbReference>
<dbReference type="EvolutionaryTrace" id="P62495"/>
<dbReference type="GeneWiki" id="Eukaryotic_release_factors"/>
<dbReference type="GenomeRNAi" id="2107"/>
<dbReference type="Pharos" id="P62495">
    <property type="development level" value="Tbio"/>
</dbReference>
<dbReference type="PRO" id="PR:P62495"/>
<dbReference type="Proteomes" id="UP000005640">
    <property type="component" value="Chromosome 5"/>
</dbReference>
<dbReference type="RNAct" id="P62495">
    <property type="molecule type" value="protein"/>
</dbReference>
<dbReference type="Bgee" id="ENSG00000120705">
    <property type="expression patterns" value="Expressed in islet of Langerhans and 206 other cell types or tissues"/>
</dbReference>
<dbReference type="ExpressionAtlas" id="P62495">
    <property type="expression patterns" value="baseline and differential"/>
</dbReference>
<dbReference type="GO" id="GO:0005737">
    <property type="term" value="C:cytoplasm"/>
    <property type="evidence" value="ECO:0000314"/>
    <property type="project" value="UniProtKB"/>
</dbReference>
<dbReference type="GO" id="GO:0005829">
    <property type="term" value="C:cytosol"/>
    <property type="evidence" value="ECO:0000318"/>
    <property type="project" value="GO_Central"/>
</dbReference>
<dbReference type="GO" id="GO:0022626">
    <property type="term" value="C:cytosolic ribosome"/>
    <property type="evidence" value="ECO:0000314"/>
    <property type="project" value="UniProt"/>
</dbReference>
<dbReference type="GO" id="GO:0018444">
    <property type="term" value="C:translation release factor complex"/>
    <property type="evidence" value="ECO:0000314"/>
    <property type="project" value="UniProtKB"/>
</dbReference>
<dbReference type="GO" id="GO:0004045">
    <property type="term" value="F:peptidyl-tRNA hydrolase activity"/>
    <property type="evidence" value="ECO:0000314"/>
    <property type="project" value="UniProtKB"/>
</dbReference>
<dbReference type="GO" id="GO:0043022">
    <property type="term" value="F:ribosome binding"/>
    <property type="evidence" value="ECO:0000304"/>
    <property type="project" value="UniProtKB"/>
</dbReference>
<dbReference type="GO" id="GO:0003723">
    <property type="term" value="F:RNA binding"/>
    <property type="evidence" value="ECO:0007005"/>
    <property type="project" value="UniProtKB"/>
</dbReference>
<dbReference type="GO" id="GO:1990825">
    <property type="term" value="F:sequence-specific mRNA binding"/>
    <property type="evidence" value="ECO:0000315"/>
    <property type="project" value="UniProtKB"/>
</dbReference>
<dbReference type="GO" id="GO:0003747">
    <property type="term" value="F:translation release factor activity"/>
    <property type="evidence" value="ECO:0000314"/>
    <property type="project" value="UniProtKB"/>
</dbReference>
<dbReference type="GO" id="GO:0016149">
    <property type="term" value="F:translation release factor activity, codon specific"/>
    <property type="evidence" value="ECO:0000318"/>
    <property type="project" value="GO_Central"/>
</dbReference>
<dbReference type="GO" id="GO:0008079">
    <property type="term" value="F:translation termination factor activity"/>
    <property type="evidence" value="ECO:0000314"/>
    <property type="project" value="UniProtKB"/>
</dbReference>
<dbReference type="GO" id="GO:0002184">
    <property type="term" value="P:cytoplasmic translational termination"/>
    <property type="evidence" value="ECO:0000318"/>
    <property type="project" value="GO_Central"/>
</dbReference>
<dbReference type="GO" id="GO:0000184">
    <property type="term" value="P:nuclear-transcribed mRNA catabolic process, nonsense-mediated decay"/>
    <property type="evidence" value="ECO:0007669"/>
    <property type="project" value="UniProtKB-KW"/>
</dbReference>
<dbReference type="GO" id="GO:0006479">
    <property type="term" value="P:protein methylation"/>
    <property type="evidence" value="ECO:0000314"/>
    <property type="project" value="MGI"/>
</dbReference>
<dbReference type="GO" id="GO:0006449">
    <property type="term" value="P:regulation of translational termination"/>
    <property type="evidence" value="ECO:0000315"/>
    <property type="project" value="UniProtKB"/>
</dbReference>
<dbReference type="GO" id="GO:0006415">
    <property type="term" value="P:translational termination"/>
    <property type="evidence" value="ECO:0000314"/>
    <property type="project" value="UniProtKB"/>
</dbReference>
<dbReference type="DisProt" id="DP00310"/>
<dbReference type="FunFam" id="3.30.1330.30:FF:000009">
    <property type="entry name" value="Eukaryotic peptide chain release factor subunit 1"/>
    <property type="match status" value="1"/>
</dbReference>
<dbReference type="FunFam" id="3.30.420.60:FF:000001">
    <property type="entry name" value="Eukaryotic peptide chain release factor subunit 1"/>
    <property type="match status" value="1"/>
</dbReference>
<dbReference type="FunFam" id="3.30.960.10:FF:000001">
    <property type="entry name" value="Eukaryotic peptide chain release factor subunit 1"/>
    <property type="match status" value="1"/>
</dbReference>
<dbReference type="Gene3D" id="3.30.1330.30">
    <property type="match status" value="1"/>
</dbReference>
<dbReference type="Gene3D" id="3.30.960.10">
    <property type="entry name" value="eRF1 domain 1"/>
    <property type="match status" value="1"/>
</dbReference>
<dbReference type="Gene3D" id="3.30.420.60">
    <property type="entry name" value="eRF1 domain 2"/>
    <property type="match status" value="1"/>
</dbReference>
<dbReference type="InterPro" id="IPR042226">
    <property type="entry name" value="eFR1_2_sf"/>
</dbReference>
<dbReference type="InterPro" id="IPR005140">
    <property type="entry name" value="eRF1_1_Pelota"/>
</dbReference>
<dbReference type="InterPro" id="IPR024049">
    <property type="entry name" value="eRF1_1_sf"/>
</dbReference>
<dbReference type="InterPro" id="IPR005141">
    <property type="entry name" value="eRF1_2"/>
</dbReference>
<dbReference type="InterPro" id="IPR005142">
    <property type="entry name" value="eRF1_3"/>
</dbReference>
<dbReference type="InterPro" id="IPR004403">
    <property type="entry name" value="Peptide_chain-rel_eRF1/aRF1"/>
</dbReference>
<dbReference type="InterPro" id="IPR029064">
    <property type="entry name" value="Ribosomal_eL30-like_sf"/>
</dbReference>
<dbReference type="NCBIfam" id="TIGR03676">
    <property type="entry name" value="aRF1_eRF1"/>
    <property type="match status" value="1"/>
</dbReference>
<dbReference type="PANTHER" id="PTHR10113">
    <property type="entry name" value="PEPTIDE CHAIN RELEASE FACTOR SUBUNIT 1"/>
    <property type="match status" value="1"/>
</dbReference>
<dbReference type="Pfam" id="PF03463">
    <property type="entry name" value="eRF1_1"/>
    <property type="match status" value="1"/>
</dbReference>
<dbReference type="Pfam" id="PF03464">
    <property type="entry name" value="eRF1_2"/>
    <property type="match status" value="1"/>
</dbReference>
<dbReference type="Pfam" id="PF03465">
    <property type="entry name" value="eRF1_3"/>
    <property type="match status" value="1"/>
</dbReference>
<dbReference type="SMART" id="SM01194">
    <property type="entry name" value="eRF1_1"/>
    <property type="match status" value="1"/>
</dbReference>
<dbReference type="SUPFAM" id="SSF55315">
    <property type="entry name" value="L30e-like"/>
    <property type="match status" value="1"/>
</dbReference>
<dbReference type="SUPFAM" id="SSF55481">
    <property type="entry name" value="N-terminal domain of eukaryotic peptide chain release factor subunit 1, ERF1"/>
    <property type="match status" value="1"/>
</dbReference>
<dbReference type="SUPFAM" id="SSF53137">
    <property type="entry name" value="Translational machinery components"/>
    <property type="match status" value="1"/>
</dbReference>
<name>ERF1_HUMAN</name>
<evidence type="ECO:0000269" key="1">
    <source>
    </source>
</evidence>
<evidence type="ECO:0000269" key="2">
    <source>
    </source>
</evidence>
<evidence type="ECO:0000269" key="3">
    <source>
    </source>
</evidence>
<evidence type="ECO:0000269" key="4">
    <source>
    </source>
</evidence>
<evidence type="ECO:0000269" key="5">
    <source>
    </source>
</evidence>
<evidence type="ECO:0000269" key="6">
    <source>
    </source>
</evidence>
<evidence type="ECO:0000269" key="7">
    <source>
    </source>
</evidence>
<evidence type="ECO:0000269" key="8">
    <source>
    </source>
</evidence>
<evidence type="ECO:0000269" key="9">
    <source>
    </source>
</evidence>
<evidence type="ECO:0000269" key="10">
    <source>
    </source>
</evidence>
<evidence type="ECO:0000269" key="11">
    <source>
    </source>
</evidence>
<evidence type="ECO:0000269" key="12">
    <source>
    </source>
</evidence>
<evidence type="ECO:0000269" key="13">
    <source>
    </source>
</evidence>
<evidence type="ECO:0000269" key="14">
    <source>
    </source>
</evidence>
<evidence type="ECO:0000269" key="15">
    <source>
    </source>
</evidence>
<evidence type="ECO:0000269" key="16">
    <source>
    </source>
</evidence>
<evidence type="ECO:0000303" key="17">
    <source>
    </source>
</evidence>
<evidence type="ECO:0000303" key="18">
    <source ref="5"/>
</evidence>
<evidence type="ECO:0000305" key="19"/>
<evidence type="ECO:0000305" key="20">
    <source>
    </source>
</evidence>
<evidence type="ECO:0007744" key="21">
    <source>
        <dbReference type="PDB" id="3E1Y"/>
    </source>
</evidence>
<evidence type="ECO:0007744" key="22">
    <source>
        <dbReference type="PDB" id="3JAG"/>
    </source>
</evidence>
<evidence type="ECO:0007744" key="23">
    <source>
        <dbReference type="PDB" id="3JAH"/>
    </source>
</evidence>
<evidence type="ECO:0007744" key="24">
    <source>
        <dbReference type="PDB" id="3JAI"/>
    </source>
</evidence>
<evidence type="ECO:0007744" key="25">
    <source>
        <dbReference type="PDB" id="5LZT"/>
    </source>
</evidence>
<evidence type="ECO:0007744" key="26">
    <source>
        <dbReference type="PDB" id="5LZU"/>
    </source>
</evidence>
<evidence type="ECO:0007744" key="27">
    <source>
        <dbReference type="PDB" id="5LZV"/>
    </source>
</evidence>
<evidence type="ECO:0007744" key="28">
    <source>
    </source>
</evidence>
<evidence type="ECO:0007744" key="29">
    <source>
    </source>
</evidence>
<evidence type="ECO:0007744" key="30">
    <source>
    </source>
</evidence>
<evidence type="ECO:0007744" key="31">
    <source>
    </source>
</evidence>
<evidence type="ECO:0007829" key="32">
    <source>
        <dbReference type="PDB" id="1DT9"/>
    </source>
</evidence>
<evidence type="ECO:0007829" key="33">
    <source>
        <dbReference type="PDB" id="2HST"/>
    </source>
</evidence>
<evidence type="ECO:0007829" key="34">
    <source>
        <dbReference type="PDB" id="2KTU"/>
    </source>
</evidence>
<evidence type="ECO:0007829" key="35">
    <source>
        <dbReference type="PDB" id="2LLX"/>
    </source>
</evidence>
<evidence type="ECO:0007829" key="36">
    <source>
        <dbReference type="PDB" id="2MQ6"/>
    </source>
</evidence>
<reference key="1">
    <citation type="journal article" date="1992" name="Gene">
        <title>Identification of a human cDNA with high homology to yeast omnipotent suppressor 45.</title>
        <authorList>
            <person name="Grenett H.E."/>
            <person name="Fuller G.M."/>
            <person name="Bounelis P."/>
        </authorList>
    </citation>
    <scope>NUCLEOTIDE SEQUENCE [MRNA] (ISOFORM 1)</scope>
</reference>
<reference key="2">
    <citation type="journal article" date="1994" name="Nature">
        <title>A highly conserved eukaryotic protein family possessing properties of polypeptide chain release factor.</title>
        <authorList>
            <person name="Frolova L."/>
            <person name="Le Goff X."/>
            <person name="Rasmussen H.H."/>
            <person name="Cheprergin S."/>
            <person name="Drugeon G."/>
            <person name="Haenni A.-L."/>
            <person name="Celis J.E."/>
            <person name="Philippe M."/>
            <person name="Justesen J."/>
            <person name="Kisselev L."/>
        </authorList>
    </citation>
    <scope>SEQUENCE REVISION</scope>
    <scope>FUNCTION</scope>
</reference>
<reference key="3">
    <citation type="journal article" date="1996" name="EMBO J.">
        <title>The catalytic subunit of protein phosphatase 2A associates with the translation termination factor eRF1.</title>
        <authorList>
            <person name="Andjelkovic N."/>
            <person name="Zolnierowicz S."/>
            <person name="van Hoof C."/>
            <person name="Goris J."/>
            <person name="Hemmings B.A."/>
        </authorList>
    </citation>
    <scope>NUCLEOTIDE SEQUENCE [MRNA] (ISOFORM 1)</scope>
    <source>
        <tissue>Brain</tissue>
    </source>
</reference>
<reference key="4">
    <citation type="journal article" date="1999" name="FEBS Lett.">
        <title>Human release factor eRF1: structural organisation of the unique functional gene on chromosome 5 and of the three processed pseudogenes.</title>
        <authorList>
            <person name="Guenet L."/>
            <person name="Toutain B."/>
            <person name="Guilleret I."/>
            <person name="Chauvel B."/>
            <person name="Deaven L.L."/>
            <person name="Longmire J.L."/>
            <person name="Le Gall L.Y."/>
            <person name="David V."/>
            <person name="Le Treut A."/>
        </authorList>
    </citation>
    <scope>NUCLEOTIDE SEQUENCE [GENOMIC DNA]</scope>
</reference>
<reference key="5">
    <citation type="submission" date="2003-05" db="EMBL/GenBank/DDBJ databases">
        <title>Cloning of human full-length CDSs in BD Creator(TM) system donor vector.</title>
        <authorList>
            <person name="Kalnine N."/>
            <person name="Chen X."/>
            <person name="Rolfs A."/>
            <person name="Halleck A."/>
            <person name="Hines L."/>
            <person name="Eisenstein S."/>
            <person name="Koundinya M."/>
            <person name="Raphael J."/>
            <person name="Moreira D."/>
            <person name="Kelley T."/>
            <person name="LaBaer J."/>
            <person name="Lin Y."/>
            <person name="Phelan M."/>
            <person name="Farmer A."/>
        </authorList>
    </citation>
    <scope>NUCLEOTIDE SEQUENCE [LARGE SCALE MRNA] (ISOFORM 2)</scope>
</reference>
<reference key="6">
    <citation type="journal article" date="2004" name="Nat. Genet.">
        <title>Complete sequencing and characterization of 21,243 full-length human cDNAs.</title>
        <authorList>
            <person name="Ota T."/>
            <person name="Suzuki Y."/>
            <person name="Nishikawa T."/>
            <person name="Otsuki T."/>
            <person name="Sugiyama T."/>
            <person name="Irie R."/>
            <person name="Wakamatsu A."/>
            <person name="Hayashi K."/>
            <person name="Sato H."/>
            <person name="Nagai K."/>
            <person name="Kimura K."/>
            <person name="Makita H."/>
            <person name="Sekine M."/>
            <person name="Obayashi M."/>
            <person name="Nishi T."/>
            <person name="Shibahara T."/>
            <person name="Tanaka T."/>
            <person name="Ishii S."/>
            <person name="Yamamoto J."/>
            <person name="Saito K."/>
            <person name="Kawai Y."/>
            <person name="Isono Y."/>
            <person name="Nakamura Y."/>
            <person name="Nagahari K."/>
            <person name="Murakami K."/>
            <person name="Yasuda T."/>
            <person name="Iwayanagi T."/>
            <person name="Wagatsuma M."/>
            <person name="Shiratori A."/>
            <person name="Sudo H."/>
            <person name="Hosoiri T."/>
            <person name="Kaku Y."/>
            <person name="Kodaira H."/>
            <person name="Kondo H."/>
            <person name="Sugawara M."/>
            <person name="Takahashi M."/>
            <person name="Kanda K."/>
            <person name="Yokoi T."/>
            <person name="Furuya T."/>
            <person name="Kikkawa E."/>
            <person name="Omura Y."/>
            <person name="Abe K."/>
            <person name="Kamihara K."/>
            <person name="Katsuta N."/>
            <person name="Sato K."/>
            <person name="Tanikawa M."/>
            <person name="Yamazaki M."/>
            <person name="Ninomiya K."/>
            <person name="Ishibashi T."/>
            <person name="Yamashita H."/>
            <person name="Murakawa K."/>
            <person name="Fujimori K."/>
            <person name="Tanai H."/>
            <person name="Kimata M."/>
            <person name="Watanabe M."/>
            <person name="Hiraoka S."/>
            <person name="Chiba Y."/>
            <person name="Ishida S."/>
            <person name="Ono Y."/>
            <person name="Takiguchi S."/>
            <person name="Watanabe S."/>
            <person name="Yosida M."/>
            <person name="Hotuta T."/>
            <person name="Kusano J."/>
            <person name="Kanehori K."/>
            <person name="Takahashi-Fujii A."/>
            <person name="Hara H."/>
            <person name="Tanase T.-O."/>
            <person name="Nomura Y."/>
            <person name="Togiya S."/>
            <person name="Komai F."/>
            <person name="Hara R."/>
            <person name="Takeuchi K."/>
            <person name="Arita M."/>
            <person name="Imose N."/>
            <person name="Musashino K."/>
            <person name="Yuuki H."/>
            <person name="Oshima A."/>
            <person name="Sasaki N."/>
            <person name="Aotsuka S."/>
            <person name="Yoshikawa Y."/>
            <person name="Matsunawa H."/>
            <person name="Ichihara T."/>
            <person name="Shiohata N."/>
            <person name="Sano S."/>
            <person name="Moriya S."/>
            <person name="Momiyama H."/>
            <person name="Satoh N."/>
            <person name="Takami S."/>
            <person name="Terashima Y."/>
            <person name="Suzuki O."/>
            <person name="Nakagawa S."/>
            <person name="Senoh A."/>
            <person name="Mizoguchi H."/>
            <person name="Goto Y."/>
            <person name="Shimizu F."/>
            <person name="Wakebe H."/>
            <person name="Hishigaki H."/>
            <person name="Watanabe T."/>
            <person name="Sugiyama A."/>
            <person name="Takemoto M."/>
            <person name="Kawakami B."/>
            <person name="Yamazaki M."/>
            <person name="Watanabe K."/>
            <person name="Kumagai A."/>
            <person name="Itakura S."/>
            <person name="Fukuzumi Y."/>
            <person name="Fujimori Y."/>
            <person name="Komiyama M."/>
            <person name="Tashiro H."/>
            <person name="Tanigami A."/>
            <person name="Fujiwara T."/>
            <person name="Ono T."/>
            <person name="Yamada K."/>
            <person name="Fujii Y."/>
            <person name="Ozaki K."/>
            <person name="Hirao M."/>
            <person name="Ohmori Y."/>
            <person name="Kawabata A."/>
            <person name="Hikiji T."/>
            <person name="Kobatake N."/>
            <person name="Inagaki H."/>
            <person name="Ikema Y."/>
            <person name="Okamoto S."/>
            <person name="Okitani R."/>
            <person name="Kawakami T."/>
            <person name="Noguchi S."/>
            <person name="Itoh T."/>
            <person name="Shigeta K."/>
            <person name="Senba T."/>
            <person name="Matsumura K."/>
            <person name="Nakajima Y."/>
            <person name="Mizuno T."/>
            <person name="Morinaga M."/>
            <person name="Sasaki M."/>
            <person name="Togashi T."/>
            <person name="Oyama M."/>
            <person name="Hata H."/>
            <person name="Watanabe M."/>
            <person name="Komatsu T."/>
            <person name="Mizushima-Sugano J."/>
            <person name="Satoh T."/>
            <person name="Shirai Y."/>
            <person name="Takahashi Y."/>
            <person name="Nakagawa K."/>
            <person name="Okumura K."/>
            <person name="Nagase T."/>
            <person name="Nomura N."/>
            <person name="Kikuchi H."/>
            <person name="Masuho Y."/>
            <person name="Yamashita R."/>
            <person name="Nakai K."/>
            <person name="Yada T."/>
            <person name="Nakamura Y."/>
            <person name="Ohara O."/>
            <person name="Isogai T."/>
            <person name="Sugano S."/>
        </authorList>
    </citation>
    <scope>NUCLEOTIDE SEQUENCE [LARGE SCALE MRNA] (ISOFORM 1)</scope>
    <source>
        <tissue>Thalamus</tissue>
    </source>
</reference>
<reference key="7">
    <citation type="journal article" date="2004" name="Nature">
        <title>The DNA sequence and comparative analysis of human chromosome 5.</title>
        <authorList>
            <person name="Schmutz J."/>
            <person name="Martin J."/>
            <person name="Terry A."/>
            <person name="Couronne O."/>
            <person name="Grimwood J."/>
            <person name="Lowry S."/>
            <person name="Gordon L.A."/>
            <person name="Scott D."/>
            <person name="Xie G."/>
            <person name="Huang W."/>
            <person name="Hellsten U."/>
            <person name="Tran-Gyamfi M."/>
            <person name="She X."/>
            <person name="Prabhakar S."/>
            <person name="Aerts A."/>
            <person name="Altherr M."/>
            <person name="Bajorek E."/>
            <person name="Black S."/>
            <person name="Branscomb E."/>
            <person name="Caoile C."/>
            <person name="Challacombe J.F."/>
            <person name="Chan Y.M."/>
            <person name="Denys M."/>
            <person name="Detter J.C."/>
            <person name="Escobar J."/>
            <person name="Flowers D."/>
            <person name="Fotopulos D."/>
            <person name="Glavina T."/>
            <person name="Gomez M."/>
            <person name="Gonzales E."/>
            <person name="Goodstein D."/>
            <person name="Grigoriev I."/>
            <person name="Groza M."/>
            <person name="Hammon N."/>
            <person name="Hawkins T."/>
            <person name="Haydu L."/>
            <person name="Israni S."/>
            <person name="Jett J."/>
            <person name="Kadner K."/>
            <person name="Kimball H."/>
            <person name="Kobayashi A."/>
            <person name="Lopez F."/>
            <person name="Lou Y."/>
            <person name="Martinez D."/>
            <person name="Medina C."/>
            <person name="Morgan J."/>
            <person name="Nandkeshwar R."/>
            <person name="Noonan J.P."/>
            <person name="Pitluck S."/>
            <person name="Pollard M."/>
            <person name="Predki P."/>
            <person name="Priest J."/>
            <person name="Ramirez L."/>
            <person name="Retterer J."/>
            <person name="Rodriguez A."/>
            <person name="Rogers S."/>
            <person name="Salamov A."/>
            <person name="Salazar A."/>
            <person name="Thayer N."/>
            <person name="Tice H."/>
            <person name="Tsai M."/>
            <person name="Ustaszewska A."/>
            <person name="Vo N."/>
            <person name="Wheeler J."/>
            <person name="Wu K."/>
            <person name="Yang J."/>
            <person name="Dickson M."/>
            <person name="Cheng J.-F."/>
            <person name="Eichler E.E."/>
            <person name="Olsen A."/>
            <person name="Pennacchio L.A."/>
            <person name="Rokhsar D.S."/>
            <person name="Richardson P."/>
            <person name="Lucas S.M."/>
            <person name="Myers R.M."/>
            <person name="Rubin E.M."/>
        </authorList>
    </citation>
    <scope>NUCLEOTIDE SEQUENCE [LARGE SCALE GENOMIC DNA]</scope>
</reference>
<reference key="8">
    <citation type="submission" date="2005-09" db="EMBL/GenBank/DDBJ databases">
        <authorList>
            <person name="Mural R.J."/>
            <person name="Istrail S."/>
            <person name="Sutton G.G."/>
            <person name="Florea L."/>
            <person name="Halpern A.L."/>
            <person name="Mobarry C.M."/>
            <person name="Lippert R."/>
            <person name="Walenz B."/>
            <person name="Shatkay H."/>
            <person name="Dew I."/>
            <person name="Miller J.R."/>
            <person name="Flanigan M.J."/>
            <person name="Edwards N.J."/>
            <person name="Bolanos R."/>
            <person name="Fasulo D."/>
            <person name="Halldorsson B.V."/>
            <person name="Hannenhalli S."/>
            <person name="Turner R."/>
            <person name="Yooseph S."/>
            <person name="Lu F."/>
            <person name="Nusskern D.R."/>
            <person name="Shue B.C."/>
            <person name="Zheng X.H."/>
            <person name="Zhong F."/>
            <person name="Delcher A.L."/>
            <person name="Huson D.H."/>
            <person name="Kravitz S.A."/>
            <person name="Mouchard L."/>
            <person name="Reinert K."/>
            <person name="Remington K.A."/>
            <person name="Clark A.G."/>
            <person name="Waterman M.S."/>
            <person name="Eichler E.E."/>
            <person name="Adams M.D."/>
            <person name="Hunkapiller M.W."/>
            <person name="Myers E.W."/>
            <person name="Venter J.C."/>
        </authorList>
    </citation>
    <scope>NUCLEOTIDE SEQUENCE [LARGE SCALE GENOMIC DNA]</scope>
</reference>
<reference key="9">
    <citation type="journal article" date="2004" name="Genome Res.">
        <title>The status, quality, and expansion of the NIH full-length cDNA project: the Mammalian Gene Collection (MGC).</title>
        <authorList>
            <consortium name="The MGC Project Team"/>
        </authorList>
    </citation>
    <scope>NUCLEOTIDE SEQUENCE [LARGE SCALE MRNA] (ISOFORMS 1 AND 2)</scope>
    <source>
        <tissue>Lymph</tissue>
        <tissue>Testis</tissue>
    </source>
</reference>
<reference key="10">
    <citation type="journal article" date="2003" name="Nat. Biotechnol.">
        <title>Exploring proteomes and analyzing protein processing by mass spectrometric identification of sorted N-terminal peptides.</title>
        <authorList>
            <person name="Gevaert K."/>
            <person name="Goethals M."/>
            <person name="Martens L."/>
            <person name="Van Damme J."/>
            <person name="Staes A."/>
            <person name="Thomas G.R."/>
            <person name="Vandekerckhove J."/>
        </authorList>
    </citation>
    <scope>PROTEIN SEQUENCE OF 2-10</scope>
    <scope>ACETYLATION AT ALA-2</scope>
    <source>
        <tissue>Platelet</tissue>
    </source>
</reference>
<reference key="11">
    <citation type="journal article" date="1999" name="RNA">
        <title>Mutations in the highly conserved GGQ motif of class 1 polypeptide release factors abolish ability of human eRF1 to trigger peptidyl-tRNA hydrolysis.</title>
        <authorList>
            <person name="Frolova L.Y."/>
            <person name="Tsivkovskii R.Y."/>
            <person name="Sivolobova G.F."/>
            <person name="Oparina N.Y."/>
            <person name="Serpinsky O.I."/>
            <person name="Blinov V.M."/>
            <person name="Tatkov S.I."/>
            <person name="Kisselev L.L."/>
        </authorList>
    </citation>
    <scope>MUTAGENESIS OF 183-GLY-GLY-184</scope>
</reference>
<reference key="12">
    <citation type="journal article" date="2006" name="Cell">
        <title>In vitro reconstitution of eukaryotic translation reveals cooperativity between release factors eRF1 and eRF3.</title>
        <authorList>
            <person name="Alkalaeva E.Z."/>
            <person name="Pisarev A.V."/>
            <person name="Frolova L.Y."/>
            <person name="Kisselev L.L."/>
            <person name="Pestova T.V."/>
        </authorList>
    </citation>
    <scope>FUNCTION</scope>
    <scope>CATALYTIC ACTIVITY</scope>
    <scope>MUTAGENESIS OF 183-GLY-GLY-184</scope>
</reference>
<reference key="13">
    <citation type="journal article" date="2008" name="FEBS Lett.">
        <title>HemK2 protein, encoded on human chromosome 21, methylates translation termination factor eRF1.</title>
        <authorList>
            <person name="Figaro S."/>
            <person name="Scrima N."/>
            <person name="Buckingham R.H."/>
            <person name="Heurgue-Hamard V."/>
        </authorList>
    </citation>
    <scope>METHYLATION AT GLN-185</scope>
</reference>
<reference key="14">
    <citation type="journal article" date="2009" name="Anal. Chem.">
        <title>Lys-N and trypsin cover complementary parts of the phosphoproteome in a refined SCX-based approach.</title>
        <authorList>
            <person name="Gauci S."/>
            <person name="Helbig A.O."/>
            <person name="Slijper M."/>
            <person name="Krijgsveld J."/>
            <person name="Heck A.J."/>
            <person name="Mohammed S."/>
        </authorList>
    </citation>
    <scope>ACETYLATION [LARGE SCALE ANALYSIS] AT ALA-2</scope>
    <scope>CLEAVAGE OF INITIATOR METHIONINE [LARGE SCALE ANALYSIS]</scope>
    <scope>IDENTIFICATION BY MASS SPECTROMETRY [LARGE SCALE ANALYSIS]</scope>
</reference>
<reference key="15">
    <citation type="journal article" date="2009" name="Genes Dev.">
        <title>SMG-8 and SMG-9, two novel subunits of the SMG-1 complex, regulate remodeling of the mRNA surveillance complex during nonsense-mediated mRNA decay.</title>
        <authorList>
            <person name="Yamashita A."/>
            <person name="Izumi N."/>
            <person name="Kashima I."/>
            <person name="Ohnishi T."/>
            <person name="Saari B."/>
            <person name="Katsuhata Y."/>
            <person name="Muramatsu R."/>
            <person name="Morita T."/>
            <person name="Iwamatsu A."/>
            <person name="Hachiya T."/>
            <person name="Kurata R."/>
            <person name="Hirano H."/>
            <person name="Anderson P."/>
            <person name="Ohno S."/>
        </authorList>
    </citation>
    <scope>IDENTIFICATION IN THE SURF COMPLEX</scope>
    <scope>FUNCTION</scope>
</reference>
<reference key="16">
    <citation type="journal article" date="2010" name="Mol. Cell. Biol.">
        <title>Deficiency in a glutamine-specific methyltransferase for release factor causes mouse embryonic lethality.</title>
        <authorList>
            <person name="Liu P."/>
            <person name="Nie S."/>
            <person name="Li B."/>
            <person name="Yang Z.Q."/>
            <person name="Xu Z.M."/>
            <person name="Fei J."/>
            <person name="Lin C."/>
            <person name="Zeng R."/>
            <person name="Xu G.L."/>
        </authorList>
    </citation>
    <scope>METHYLATION AT GLN-185</scope>
    <scope>MUTAGENESIS OF GLN-185</scope>
</reference>
<reference key="17">
    <citation type="journal article" date="2011" name="BMC Syst. Biol.">
        <title>Initial characterization of the human central proteome.</title>
        <authorList>
            <person name="Burkard T.R."/>
            <person name="Planyavsky M."/>
            <person name="Kaupe I."/>
            <person name="Breitwieser F.P."/>
            <person name="Buerckstuemmer T."/>
            <person name="Bennett K.L."/>
            <person name="Superti-Furga G."/>
            <person name="Colinge J."/>
        </authorList>
    </citation>
    <scope>IDENTIFICATION BY MASS SPECTROMETRY [LARGE SCALE ANALYSIS]</scope>
</reference>
<reference key="18">
    <citation type="journal article" date="2012" name="Proc. Natl. Acad. Sci. U.S.A.">
        <title>N-terminal acetylome analyses and functional insights of the N-terminal acetyltransferase NatB.</title>
        <authorList>
            <person name="Van Damme P."/>
            <person name="Lasa M."/>
            <person name="Polevoda B."/>
            <person name="Gazquez C."/>
            <person name="Elosegui-Artola A."/>
            <person name="Kim D.S."/>
            <person name="De Juan-Pardo E."/>
            <person name="Demeyer K."/>
            <person name="Hole K."/>
            <person name="Larrea E."/>
            <person name="Timmerman E."/>
            <person name="Prieto J."/>
            <person name="Arnesen T."/>
            <person name="Sherman F."/>
            <person name="Gevaert K."/>
            <person name="Aldabe R."/>
        </authorList>
    </citation>
    <scope>ACETYLATION [LARGE SCALE ANALYSIS] AT ALA-2</scope>
    <scope>CLEAVAGE OF INITIATOR METHIONINE [LARGE SCALE ANALYSIS]</scope>
    <scope>IDENTIFICATION BY MASS SPECTROMETRY [LARGE SCALE ANALYSIS]</scope>
</reference>
<reference key="19">
    <citation type="journal article" date="2013" name="J. Proteome Res.">
        <title>Toward a comprehensive characterization of a human cancer cell phosphoproteome.</title>
        <authorList>
            <person name="Zhou H."/>
            <person name="Di Palma S."/>
            <person name="Preisinger C."/>
            <person name="Peng M."/>
            <person name="Polat A.N."/>
            <person name="Heck A.J."/>
            <person name="Mohammed S."/>
        </authorList>
    </citation>
    <scope>PHOSPHORYLATION [LARGE SCALE ANALYSIS] AT THR-347</scope>
    <scope>IDENTIFICATION BY MASS SPECTROMETRY [LARGE SCALE ANALYSIS]</scope>
    <source>
        <tissue>Erythroleukemia</tissue>
    </source>
</reference>
<reference key="20">
    <citation type="journal article" date="2014" name="J. Proteomics">
        <title>An enzyme assisted RP-RPLC approach for in-depth analysis of human liver phosphoproteome.</title>
        <authorList>
            <person name="Bian Y."/>
            <person name="Song C."/>
            <person name="Cheng K."/>
            <person name="Dong M."/>
            <person name="Wang F."/>
            <person name="Huang J."/>
            <person name="Sun D."/>
            <person name="Wang L."/>
            <person name="Ye M."/>
            <person name="Zou H."/>
        </authorList>
    </citation>
    <scope>IDENTIFICATION BY MASS SPECTROMETRY [LARGE SCALE ANALYSIS]</scope>
    <source>
        <tissue>Liver</tissue>
    </source>
</reference>
<reference key="21">
    <citation type="journal article" date="2014" name="Mol. Cell">
        <title>Optimal translational termination requires C4 lysyl hydroxylation of eRF1.</title>
        <authorList>
            <person name="Feng T."/>
            <person name="Yamamoto A."/>
            <person name="Wilkins S.E."/>
            <person name="Sokolova E."/>
            <person name="Yates L.A."/>
            <person name="Muenzel M."/>
            <person name="Singh P."/>
            <person name="Hopkinson R.J."/>
            <person name="Fischer R."/>
            <person name="Cockman M.E."/>
            <person name="Shelley J."/>
            <person name="Trudgian D.C."/>
            <person name="Schoedel J."/>
            <person name="McCullagh J.S."/>
            <person name="Ge W."/>
            <person name="Kessler B.M."/>
            <person name="Gilbert R.J."/>
            <person name="Frolova L.Y."/>
            <person name="Alkalaeva E."/>
            <person name="Ratcliffe P.J."/>
            <person name="Schofield C.J."/>
            <person name="Coleman M.L."/>
        </authorList>
    </citation>
    <scope>FUNCTION</scope>
    <scope>INTERACTION WITH JMJD4</scope>
    <scope>SUBCELLULAR LOCATION</scope>
    <scope>HYDROXYLATION AT LYS-63</scope>
    <scope>MUTAGENESIS OF LYS-63</scope>
    <scope>MOTIF NIKS</scope>
</reference>
<reference key="22">
    <citation type="journal article" date="2015" name="Proteomics">
        <title>N-terminome analysis of the human mitochondrial proteome.</title>
        <authorList>
            <person name="Vaca Jacome A.S."/>
            <person name="Rabilloud T."/>
            <person name="Schaeffer-Reiss C."/>
            <person name="Rompais M."/>
            <person name="Ayoub D."/>
            <person name="Lane L."/>
            <person name="Bairoch A."/>
            <person name="Van Dorsselaer A."/>
            <person name="Carapito C."/>
        </authorList>
    </citation>
    <scope>IDENTIFICATION BY MASS SPECTROMETRY [LARGE SCALE ANALYSIS]</scope>
</reference>
<reference key="23">
    <citation type="journal article" date="2016" name="J. Biol. Chem.">
        <title>Substrate specificity of the HEMK2 protein glutamine methyltransferase and identification of novel substrates.</title>
        <authorList>
            <person name="Kusevic D."/>
            <person name="Kudithipudi S."/>
            <person name="Jeltsch A."/>
        </authorList>
    </citation>
    <scope>METHYLATION AT GLN-185</scope>
    <scope>MUTAGENESIS OF GLN-185</scope>
</reference>
<reference key="24">
    <citation type="journal article" date="2017" name="Nat. Struct. Mol. Biol.">
        <title>Site-specific mapping of the human SUMO proteome reveals co-modification with phosphorylation.</title>
        <authorList>
            <person name="Hendriks I.A."/>
            <person name="Lyon D."/>
            <person name="Young C."/>
            <person name="Jensen L.J."/>
            <person name="Vertegaal A.C."/>
            <person name="Nielsen M.L."/>
        </authorList>
    </citation>
    <scope>SUMOYLATION [LARGE SCALE ANALYSIS] AT LYS-87 AND LYS-404</scope>
    <scope>IDENTIFICATION BY MASS SPECTROMETRY [LARGE SCALE ANALYSIS]</scope>
</reference>
<reference key="25">
    <citation type="journal article" date="2019" name="Cell">
        <title>Regulation of HIV-1 Gag-Pol Expression by Shiftless, an Inhibitor of Programmed -1 Ribosomal Frameshifting.</title>
        <authorList>
            <person name="Wang X."/>
            <person name="Xuan Y."/>
            <person name="Han Y."/>
            <person name="Ding X."/>
            <person name="Ye K."/>
            <person name="Yang F."/>
            <person name="Gao P."/>
            <person name="Goff S.P."/>
            <person name="Gao G."/>
        </authorList>
    </citation>
    <scope>FUNCTION</scope>
</reference>
<reference key="26">
    <citation type="journal article" date="2023" name="Cell">
        <title>An E3 ligase network engages GCN1 to promote the degradation of translation factors on stalled ribosomes.</title>
        <authorList>
            <person name="Oltion K."/>
            <person name="Carelli J.D."/>
            <person name="Yang T."/>
            <person name="See S.K."/>
            <person name="Wang H.Y."/>
            <person name="Kampmann M."/>
            <person name="Taunton J."/>
        </authorList>
    </citation>
    <scope>FUNCTION</scope>
    <scope>UBIQUITINATION</scope>
    <scope>MUTAGENESIS OF 183-GLY-GLY-184</scope>
</reference>
<reference key="27">
    <citation type="journal article" date="2023" name="Cell Rep.">
        <title>Drug-induced eRF1 degradation promotes readthrough and reveals a new branch of ribosome quality control.</title>
        <authorList>
            <person name="Gurzeler L.A."/>
            <person name="Link M."/>
            <person name="Ibig Y."/>
            <person name="Schmidt I."/>
            <person name="Galuba O."/>
            <person name="Schoenbett J."/>
            <person name="Gasser-Didierlaurant C."/>
            <person name="Parker C.N."/>
            <person name="Mao X."/>
            <person name="Bitsch F."/>
            <person name="Schirle M."/>
            <person name="Couttet P."/>
            <person name="Sigoillot F."/>
            <person name="Ziegelmueller J."/>
            <person name="Uldry A.C."/>
            <person name="Teodorowicz W."/>
            <person name="Schmiedeberg N."/>
            <person name="Muehlemann O."/>
            <person name="Reinhardt J."/>
        </authorList>
    </citation>
    <scope>UBIQUITINATION AT LYS-279</scope>
</reference>
<reference key="28">
    <citation type="journal article" date="2000" name="Cell">
        <title>The crystal structure of human eukaryotic release factor eRF1 -- mechanism of stop codon recognition and peptidyl-tRNA hydrolysis.</title>
        <authorList>
            <person name="Song H."/>
            <person name="Mugnier P."/>
            <person name="Das A.K."/>
            <person name="Webb H.M."/>
            <person name="Evans D.R."/>
            <person name="Tuite M.F."/>
            <person name="Hemmings B.A."/>
            <person name="Barford D."/>
        </authorList>
    </citation>
    <scope>X-RAY CRYSTALLOGRAPHY (2.7 ANGSTROMS)</scope>
    <scope>FUNCTION</scope>
    <scope>CATALYTIC ACTIVITY</scope>
</reference>
<reference key="29">
    <citation type="journal article" date="2007" name="FEBS J.">
        <title>Eukaryotic class 1 translation termination factor eRF1 -- the NMR structure and dynamics of the middle domain involved in triggering ribosome-dependent peptidyl-tRNA hydrolysis.</title>
        <authorList>
            <person name="Ivanova E.V."/>
            <person name="Kolosov P.M."/>
            <person name="Birdsall B."/>
            <person name="Kelly G."/>
            <person name="Pastore A."/>
            <person name="Kisselev L.L."/>
            <person name="Polshakov V.I."/>
        </authorList>
    </citation>
    <scope>STRUCTURE BY NMR OF 140-277</scope>
</reference>
<reference evidence="21" key="30">
    <citation type="journal article" date="2009" name="Genes Dev.">
        <title>Structural insights into eRF3 and stop codon recognition by eRF1.</title>
        <authorList>
            <person name="Cheng Z."/>
            <person name="Saito K."/>
            <person name="Pisarev A.V."/>
            <person name="Wada M."/>
            <person name="Pisareva V.P."/>
            <person name="Pestova T.V."/>
            <person name="Gajda M."/>
            <person name="Round A."/>
            <person name="Kong C."/>
            <person name="Lim M."/>
            <person name="Nakamura Y."/>
            <person name="Svergun D.I."/>
            <person name="Ito K."/>
            <person name="Song H."/>
        </authorList>
    </citation>
    <scope>X-RAY CRYSTALLOGRAPHY (3.80 ANGSTROMS) IN COMPLEX WITH GSPT1</scope>
    <scope>IDENTIFICATION IN THE ERF1-ERF3-GTP TERNARY COMPLEX</scope>
</reference>
<reference evidence="22 23 24" key="31">
    <citation type="journal article" date="2015" name="Nature">
        <title>Structural basis for stop codon recognition in eukaryotes.</title>
        <authorList>
            <person name="Brown A."/>
            <person name="Shao S."/>
            <person name="Murray J."/>
            <person name="Hegde R.S."/>
            <person name="Ramakrishnan V."/>
        </authorList>
    </citation>
    <scope>STRUCTURE BY ELECTRON MICROSCOPY (3.45 ANGSTROMS) OF 6-421</scope>
    <scope>FUNCTION</scope>
    <scope>MUTAGENESIS OF 183-GLY-GLY-184</scope>
</reference>
<reference evidence="25 26 27" key="32">
    <citation type="journal article" date="2016" name="Cell">
        <title>Decoding mammalian ribosome-mRNA states by translational GTPase complexes.</title>
        <authorList>
            <person name="Shao S."/>
            <person name="Murray J."/>
            <person name="Brown A."/>
            <person name="Taunton J."/>
            <person name="Ramakrishnan V."/>
            <person name="Hegde R.S."/>
        </authorList>
    </citation>
    <scope>STRUCTURE BY ELECTRON MICROSCOPY (3.35 ANGSTROMS) IN COMPLEX WITH GSPT1 AND RIBOSOME</scope>
    <scope>FUNCTION</scope>
    <scope>IDENTIFICATION IN THE ERF1-ERF3-GTP TERNARY COMPLEX</scope>
</reference>
<sequence length="437" mass="49031">MADDPSAADRNVEIWKIKKLIKSLEAARGNGTSMISLIIPPKDQISRVAKMLADEFGTASNIKSRVNRLSVLGAITSVQQRLKLYNKVPPNGLVVYCGTIVTEEGKEKKVNIDFEPFKPINTSLYLCDNKFHTEALTALLSDDSKFGFIVIDGSGALFGTLQGNTREVLHKFTVDLPKKHGRGGQSALRFARLRMEKRHNYVRKVAETAVQLFISGDKVNVAGLVLAGSADFKTELSQSDMFDQRLQSKVLKLVDISYGGENGFNQAIELSTEVLSNVKFIQEKKLIGRYFDEISQDTGKYCFGVEDTLKALEMGAVEILIVYENLDIMRYVLHCQGTEEEKILYLTPEQEKDKSHFTDKETGQEHELIESMPLLEWFANNYKKFGATLEIVTDKSQEGSQFVKGFGGIGGILRYRVDFQGMEYQGGDDEFFDLDDY</sequence>
<keyword id="KW-0002">3D-structure</keyword>
<keyword id="KW-0007">Acetylation</keyword>
<keyword id="KW-0025">Alternative splicing</keyword>
<keyword id="KW-0963">Cytoplasm</keyword>
<keyword id="KW-0903">Direct protein sequencing</keyword>
<keyword id="KW-0379">Hydroxylation</keyword>
<keyword id="KW-1017">Isopeptide bond</keyword>
<keyword id="KW-0488">Methylation</keyword>
<keyword id="KW-0866">Nonsense-mediated mRNA decay</keyword>
<keyword id="KW-0597">Phosphoprotein</keyword>
<keyword id="KW-0648">Protein biosynthesis</keyword>
<keyword id="KW-1267">Proteomics identification</keyword>
<keyword id="KW-1185">Reference proteome</keyword>
<keyword id="KW-0832">Ubl conjugation</keyword>